<accession>Q2Y5P3</accession>
<reference key="1">
    <citation type="submission" date="2005-08" db="EMBL/GenBank/DDBJ databases">
        <title>Complete sequence of chromosome 1 of Nitrosospira multiformis ATCC 25196.</title>
        <authorList>
            <person name="Copeland A."/>
            <person name="Lucas S."/>
            <person name="Lapidus A."/>
            <person name="Barry K."/>
            <person name="Detter J.C."/>
            <person name="Glavina T."/>
            <person name="Hammon N."/>
            <person name="Israni S."/>
            <person name="Pitluck S."/>
            <person name="Chain P."/>
            <person name="Malfatti S."/>
            <person name="Shin M."/>
            <person name="Vergez L."/>
            <person name="Schmutz J."/>
            <person name="Larimer F."/>
            <person name="Land M."/>
            <person name="Hauser L."/>
            <person name="Kyrpides N."/>
            <person name="Lykidis A."/>
            <person name="Richardson P."/>
        </authorList>
    </citation>
    <scope>NUCLEOTIDE SEQUENCE [LARGE SCALE GENOMIC DNA]</scope>
    <source>
        <strain>ATCC 25196 / NCIMB 11849 / C 71</strain>
    </source>
</reference>
<comment type="function">
    <text evidence="1">Peptide chain release factor 1 directs the termination of translation in response to the peptide chain termination codons UAG and UAA.</text>
</comment>
<comment type="subcellular location">
    <subcellularLocation>
        <location evidence="1">Cytoplasm</location>
    </subcellularLocation>
</comment>
<comment type="PTM">
    <text evidence="1">Methylated by PrmC. Methylation increases the termination efficiency of RF1.</text>
</comment>
<comment type="similarity">
    <text evidence="1">Belongs to the prokaryotic/mitochondrial release factor family.</text>
</comment>
<proteinExistence type="inferred from homology"/>
<evidence type="ECO:0000255" key="1">
    <source>
        <dbReference type="HAMAP-Rule" id="MF_00093"/>
    </source>
</evidence>
<gene>
    <name evidence="1" type="primary">prfA</name>
    <name type="ordered locus">Nmul_A2641</name>
</gene>
<protein>
    <recommendedName>
        <fullName evidence="1">Peptide chain release factor 1</fullName>
        <shortName evidence="1">RF-1</shortName>
    </recommendedName>
</protein>
<dbReference type="EMBL" id="CP000103">
    <property type="protein sequence ID" value="ABB75928.1"/>
    <property type="molecule type" value="Genomic_DNA"/>
</dbReference>
<dbReference type="RefSeq" id="WP_011381925.1">
    <property type="nucleotide sequence ID" value="NC_007614.1"/>
</dbReference>
<dbReference type="SMR" id="Q2Y5P3"/>
<dbReference type="STRING" id="323848.Nmul_A2641"/>
<dbReference type="KEGG" id="nmu:Nmul_A2641"/>
<dbReference type="eggNOG" id="COG0216">
    <property type="taxonomic scope" value="Bacteria"/>
</dbReference>
<dbReference type="HOGENOM" id="CLU_036856_0_1_4"/>
<dbReference type="OrthoDB" id="9806673at2"/>
<dbReference type="Proteomes" id="UP000002718">
    <property type="component" value="Chromosome"/>
</dbReference>
<dbReference type="GO" id="GO:0005737">
    <property type="term" value="C:cytoplasm"/>
    <property type="evidence" value="ECO:0007669"/>
    <property type="project" value="UniProtKB-SubCell"/>
</dbReference>
<dbReference type="GO" id="GO:0016149">
    <property type="term" value="F:translation release factor activity, codon specific"/>
    <property type="evidence" value="ECO:0007669"/>
    <property type="project" value="UniProtKB-UniRule"/>
</dbReference>
<dbReference type="FunFam" id="3.30.160.20:FF:000004">
    <property type="entry name" value="Peptide chain release factor 1"/>
    <property type="match status" value="1"/>
</dbReference>
<dbReference type="FunFam" id="3.30.70.1660:FF:000002">
    <property type="entry name" value="Peptide chain release factor 1"/>
    <property type="match status" value="1"/>
</dbReference>
<dbReference type="FunFam" id="3.30.70.1660:FF:000004">
    <property type="entry name" value="Peptide chain release factor 1"/>
    <property type="match status" value="1"/>
</dbReference>
<dbReference type="Gene3D" id="3.30.160.20">
    <property type="match status" value="1"/>
</dbReference>
<dbReference type="Gene3D" id="3.30.70.1660">
    <property type="match status" value="2"/>
</dbReference>
<dbReference type="Gene3D" id="6.10.140.1950">
    <property type="match status" value="1"/>
</dbReference>
<dbReference type="HAMAP" id="MF_00093">
    <property type="entry name" value="Rel_fac_1"/>
    <property type="match status" value="1"/>
</dbReference>
<dbReference type="InterPro" id="IPR005139">
    <property type="entry name" value="PCRF"/>
</dbReference>
<dbReference type="InterPro" id="IPR000352">
    <property type="entry name" value="Pep_chain_release_fac_I"/>
</dbReference>
<dbReference type="InterPro" id="IPR045853">
    <property type="entry name" value="Pep_chain_release_fac_I_sf"/>
</dbReference>
<dbReference type="InterPro" id="IPR050057">
    <property type="entry name" value="Prokaryotic/Mito_RF"/>
</dbReference>
<dbReference type="InterPro" id="IPR004373">
    <property type="entry name" value="RF-1"/>
</dbReference>
<dbReference type="NCBIfam" id="TIGR00019">
    <property type="entry name" value="prfA"/>
    <property type="match status" value="1"/>
</dbReference>
<dbReference type="NCBIfam" id="NF001859">
    <property type="entry name" value="PRK00591.1"/>
    <property type="match status" value="1"/>
</dbReference>
<dbReference type="PANTHER" id="PTHR43804">
    <property type="entry name" value="LD18447P"/>
    <property type="match status" value="1"/>
</dbReference>
<dbReference type="PANTHER" id="PTHR43804:SF7">
    <property type="entry name" value="LD18447P"/>
    <property type="match status" value="1"/>
</dbReference>
<dbReference type="Pfam" id="PF03462">
    <property type="entry name" value="PCRF"/>
    <property type="match status" value="1"/>
</dbReference>
<dbReference type="Pfam" id="PF00472">
    <property type="entry name" value="RF-1"/>
    <property type="match status" value="1"/>
</dbReference>
<dbReference type="SMART" id="SM00937">
    <property type="entry name" value="PCRF"/>
    <property type="match status" value="1"/>
</dbReference>
<dbReference type="SUPFAM" id="SSF75620">
    <property type="entry name" value="Release factor"/>
    <property type="match status" value="1"/>
</dbReference>
<dbReference type="PROSITE" id="PS00745">
    <property type="entry name" value="RF_PROK_I"/>
    <property type="match status" value="1"/>
</dbReference>
<keyword id="KW-0963">Cytoplasm</keyword>
<keyword id="KW-0488">Methylation</keyword>
<keyword id="KW-0648">Protein biosynthesis</keyword>
<keyword id="KW-1185">Reference proteome</keyword>
<sequence length="358" mass="40073">MNKSMTAKLTQLSVRLEELNRLLSSESITVNLDQYRKLTRERAEIAPVVDLYNAYLQSEQDIHTAQEMAAEAEMREFADAEIRDAKERLVRYGAELQKQLLPKDPNDERNIFLEIRAGTGGDESALFAADLFRMYARFAERQRWQVEIISQSPSDVGGYKEIIAKISGEGAYSKLKFESGGHRVQRVPATETQGRIHTSACTVAVMPEADEIEDVALNPAELRIDTFRASGAGGQHINKTDSAVRITHLPTGIVVECQDGRSQHKNKAQAMSVLAARIRDKQMQEQQSKQAATRKSLVGTGNRSGRIRTYNFPQGRITDHRINLTLYKIEQIMDGDLNELCSALLAEHQAEQLAAMAE</sequence>
<organism>
    <name type="scientific">Nitrosospira multiformis (strain ATCC 25196 / NCIMB 11849 / C 71)</name>
    <dbReference type="NCBI Taxonomy" id="323848"/>
    <lineage>
        <taxon>Bacteria</taxon>
        <taxon>Pseudomonadati</taxon>
        <taxon>Pseudomonadota</taxon>
        <taxon>Betaproteobacteria</taxon>
        <taxon>Nitrosomonadales</taxon>
        <taxon>Nitrosomonadaceae</taxon>
        <taxon>Nitrosospira</taxon>
    </lineage>
</organism>
<name>RF1_NITMU</name>
<feature type="chain" id="PRO_0000263308" description="Peptide chain release factor 1">
    <location>
        <begin position="1"/>
        <end position="358"/>
    </location>
</feature>
<feature type="modified residue" description="N5-methylglutamine" evidence="1">
    <location>
        <position position="235"/>
    </location>
</feature>